<keyword id="KW-0067">ATP-binding</keyword>
<keyword id="KW-0436">Ligase</keyword>
<keyword id="KW-0496">Mitochondrion</keyword>
<keyword id="KW-0547">Nucleotide-binding</keyword>
<keyword id="KW-0648">Protein biosynthesis</keyword>
<keyword id="KW-1185">Reference proteome</keyword>
<evidence type="ECO:0000255" key="1">
    <source>
        <dbReference type="HAMAP-Rule" id="MF_03150"/>
    </source>
</evidence>
<evidence type="ECO:0000256" key="2">
    <source>
        <dbReference type="SAM" id="MobiDB-lite"/>
    </source>
</evidence>
<comment type="function">
    <text evidence="1">Allows the formation of correctly charged Gln-tRNA(Gln) through the transamidation of misacylated Glu-tRNA(Gln) in the mitochondria. The reaction takes place in the presence of glutamine and ATP through an activated gamma-phospho-Glu-tRNA(Gln).</text>
</comment>
<comment type="catalytic activity">
    <reaction evidence="1">
        <text>L-glutamyl-tRNA(Gln) + L-glutamine + ATP + H2O = L-glutaminyl-tRNA(Gln) + L-glutamate + ADP + phosphate + H(+)</text>
        <dbReference type="Rhea" id="RHEA:17521"/>
        <dbReference type="Rhea" id="RHEA-COMP:9681"/>
        <dbReference type="Rhea" id="RHEA-COMP:9684"/>
        <dbReference type="ChEBI" id="CHEBI:15377"/>
        <dbReference type="ChEBI" id="CHEBI:15378"/>
        <dbReference type="ChEBI" id="CHEBI:29985"/>
        <dbReference type="ChEBI" id="CHEBI:30616"/>
        <dbReference type="ChEBI" id="CHEBI:43474"/>
        <dbReference type="ChEBI" id="CHEBI:58359"/>
        <dbReference type="ChEBI" id="CHEBI:78520"/>
        <dbReference type="ChEBI" id="CHEBI:78521"/>
        <dbReference type="ChEBI" id="CHEBI:456216"/>
        <dbReference type="EC" id="6.3.5.7"/>
    </reaction>
</comment>
<comment type="subunit">
    <text evidence="1">Subunit of the heterotrimeric GatCAB amidotransferase (AdT) complex, composed of A, B and C subunits.</text>
</comment>
<comment type="subcellular location">
    <subcellularLocation>
        <location evidence="1">Mitochondrion</location>
    </subcellularLocation>
</comment>
<comment type="similarity">
    <text evidence="1">Belongs to the amidase family. GatA subfamily.</text>
</comment>
<dbReference type="EC" id="6.3.5.7" evidence="1"/>
<dbReference type="EMBL" id="CM001234">
    <property type="protein sequence ID" value="EHA49893.1"/>
    <property type="molecule type" value="Genomic_DNA"/>
</dbReference>
<dbReference type="RefSeq" id="XP_003716212.1">
    <property type="nucleotide sequence ID" value="XM_003716164.1"/>
</dbReference>
<dbReference type="SMR" id="A4QR60"/>
<dbReference type="FunCoup" id="A4QR60">
    <property type="interactions" value="337"/>
</dbReference>
<dbReference type="STRING" id="242507.A4QR60"/>
<dbReference type="EnsemblFungi" id="MGG_13483T0">
    <property type="protein sequence ID" value="MGG_13483T0"/>
    <property type="gene ID" value="MGG_13483"/>
</dbReference>
<dbReference type="GeneID" id="5051641"/>
<dbReference type="KEGG" id="mgr:MGG_13483"/>
<dbReference type="VEuPathDB" id="FungiDB:MGG_13483"/>
<dbReference type="eggNOG" id="KOG1211">
    <property type="taxonomic scope" value="Eukaryota"/>
</dbReference>
<dbReference type="HOGENOM" id="CLU_009600_7_6_1"/>
<dbReference type="InParanoid" id="A4QR60"/>
<dbReference type="OMA" id="QPASYCG"/>
<dbReference type="OrthoDB" id="421993at2759"/>
<dbReference type="Proteomes" id="UP000009058">
    <property type="component" value="Chromosome 4"/>
</dbReference>
<dbReference type="GO" id="GO:0030956">
    <property type="term" value="C:glutamyl-tRNA(Gln) amidotransferase complex"/>
    <property type="evidence" value="ECO:0007669"/>
    <property type="project" value="UniProtKB-UniRule"/>
</dbReference>
<dbReference type="GO" id="GO:0005739">
    <property type="term" value="C:mitochondrion"/>
    <property type="evidence" value="ECO:0007669"/>
    <property type="project" value="UniProtKB-SubCell"/>
</dbReference>
<dbReference type="GO" id="GO:0005524">
    <property type="term" value="F:ATP binding"/>
    <property type="evidence" value="ECO:0007669"/>
    <property type="project" value="UniProtKB-KW"/>
</dbReference>
<dbReference type="GO" id="GO:0050567">
    <property type="term" value="F:glutaminyl-tRNA synthase (glutamine-hydrolyzing) activity"/>
    <property type="evidence" value="ECO:0007669"/>
    <property type="project" value="UniProtKB-UniRule"/>
</dbReference>
<dbReference type="GO" id="GO:0070681">
    <property type="term" value="P:glutaminyl-tRNAGln biosynthesis via transamidation"/>
    <property type="evidence" value="ECO:0007669"/>
    <property type="project" value="UniProtKB-UniRule"/>
</dbReference>
<dbReference type="GO" id="GO:0032543">
    <property type="term" value="P:mitochondrial translation"/>
    <property type="evidence" value="ECO:0007669"/>
    <property type="project" value="UniProtKB-UniRule"/>
</dbReference>
<dbReference type="Gene3D" id="3.90.1300.10">
    <property type="entry name" value="Amidase signature (AS) domain"/>
    <property type="match status" value="1"/>
</dbReference>
<dbReference type="HAMAP" id="MF_00120">
    <property type="entry name" value="GatA"/>
    <property type="match status" value="1"/>
</dbReference>
<dbReference type="InterPro" id="IPR000120">
    <property type="entry name" value="Amidase"/>
</dbReference>
<dbReference type="InterPro" id="IPR020556">
    <property type="entry name" value="Amidase_CS"/>
</dbReference>
<dbReference type="InterPro" id="IPR023631">
    <property type="entry name" value="Amidase_dom"/>
</dbReference>
<dbReference type="InterPro" id="IPR036928">
    <property type="entry name" value="AS_sf"/>
</dbReference>
<dbReference type="InterPro" id="IPR004412">
    <property type="entry name" value="GatA"/>
</dbReference>
<dbReference type="PANTHER" id="PTHR11895:SF7">
    <property type="entry name" value="GLUTAMYL-TRNA(GLN) AMIDOTRANSFERASE SUBUNIT A, MITOCHONDRIAL"/>
    <property type="match status" value="1"/>
</dbReference>
<dbReference type="PANTHER" id="PTHR11895">
    <property type="entry name" value="TRANSAMIDASE"/>
    <property type="match status" value="1"/>
</dbReference>
<dbReference type="Pfam" id="PF01425">
    <property type="entry name" value="Amidase"/>
    <property type="match status" value="2"/>
</dbReference>
<dbReference type="SUPFAM" id="SSF75304">
    <property type="entry name" value="Amidase signature (AS) enzymes"/>
    <property type="match status" value="1"/>
</dbReference>
<dbReference type="PROSITE" id="PS00571">
    <property type="entry name" value="AMIDASES"/>
    <property type="match status" value="1"/>
</dbReference>
<protein>
    <recommendedName>
        <fullName evidence="1">Glutamyl-tRNA(Gln) amidotransferase subunit A, mitochondrial</fullName>
        <shortName evidence="1">Glu-AdT subunit A</shortName>
        <ecNumber evidence="1">6.3.5.7</ecNumber>
    </recommendedName>
</protein>
<proteinExistence type="inferred from homology"/>
<reference key="1">
    <citation type="journal article" date="2005" name="Nature">
        <title>The genome sequence of the rice blast fungus Magnaporthe grisea.</title>
        <authorList>
            <person name="Dean R.A."/>
            <person name="Talbot N.J."/>
            <person name="Ebbole D.J."/>
            <person name="Farman M.L."/>
            <person name="Mitchell T.K."/>
            <person name="Orbach M.J."/>
            <person name="Thon M.R."/>
            <person name="Kulkarni R."/>
            <person name="Xu J.-R."/>
            <person name="Pan H."/>
            <person name="Read N.D."/>
            <person name="Lee Y.-H."/>
            <person name="Carbone I."/>
            <person name="Brown D."/>
            <person name="Oh Y.Y."/>
            <person name="Donofrio N."/>
            <person name="Jeong J.S."/>
            <person name="Soanes D.M."/>
            <person name="Djonovic S."/>
            <person name="Kolomiets E."/>
            <person name="Rehmeyer C."/>
            <person name="Li W."/>
            <person name="Harding M."/>
            <person name="Kim S."/>
            <person name="Lebrun M.-H."/>
            <person name="Bohnert H."/>
            <person name="Coughlan S."/>
            <person name="Butler J."/>
            <person name="Calvo S.E."/>
            <person name="Ma L.-J."/>
            <person name="Nicol R."/>
            <person name="Purcell S."/>
            <person name="Nusbaum C."/>
            <person name="Galagan J.E."/>
            <person name="Birren B.W."/>
        </authorList>
    </citation>
    <scope>NUCLEOTIDE SEQUENCE [LARGE SCALE GENOMIC DNA]</scope>
    <source>
        <strain>70-15 / ATCC MYA-4617 / FGSC 8958</strain>
    </source>
</reference>
<organism>
    <name type="scientific">Pyricularia oryzae (strain 70-15 / ATCC MYA-4617 / FGSC 8958)</name>
    <name type="common">Rice blast fungus</name>
    <name type="synonym">Magnaporthe oryzae</name>
    <dbReference type="NCBI Taxonomy" id="242507"/>
    <lineage>
        <taxon>Eukaryota</taxon>
        <taxon>Fungi</taxon>
        <taxon>Dikarya</taxon>
        <taxon>Ascomycota</taxon>
        <taxon>Pezizomycotina</taxon>
        <taxon>Sordariomycetes</taxon>
        <taxon>Sordariomycetidae</taxon>
        <taxon>Magnaporthales</taxon>
        <taxon>Pyriculariaceae</taxon>
        <taxon>Pyricularia</taxon>
    </lineage>
</organism>
<gene>
    <name type="ORF">MGG_13483</name>
</gene>
<accession>A4QR60</accession>
<accession>G4N6S6</accession>
<feature type="chain" id="PRO_0000413354" description="Glutamyl-tRNA(Gln) amidotransferase subunit A, mitochondrial">
    <location>
        <begin position="1"/>
        <end position="517"/>
    </location>
</feature>
<feature type="region of interest" description="Disordered" evidence="2">
    <location>
        <begin position="106"/>
        <end position="132"/>
    </location>
</feature>
<feature type="active site" description="Charge relay system" evidence="1">
    <location>
        <position position="58"/>
    </location>
</feature>
<feature type="active site" description="Charge relay system" evidence="1">
    <location>
        <position position="131"/>
    </location>
</feature>
<feature type="active site" description="Acyl-ester intermediate" evidence="1">
    <location>
        <position position="155"/>
    </location>
</feature>
<sequence>MLVHGRRLGLLLGRSHVAAPKHTSHLPRRTVHLNHFVSKGEAASEAEPPQSTFTVAVKDNIATQAHPTTCASNILRDYTSPYEATVVRQLRRRGARVVGTTNLDEFGMGTHSTHSAHGPVASPAGRSAGGSSGGSAVAVAAGEVEVALGTDTGGSVRLPAAYNGVVGFKPSYGMLSRYGVVPYANSLDTVGLLARSVERIRDLVVGEGLWAQHDDKDPTSLSAAARLRCASGRTGYKGEAAKVGWEGLTFGIPLEYNIFELDPLIREAWEEVAALLQSLGANVVPVSLPTTRQALSAYYVLAPAEASSNLAKYDGVRYGNPGPESENEGGVLYSAARGAGFGDEVKRRILLGAYSLSSEAMDNYFVQAQKVRRLVRGDFDRVFLLDNPLVDKEPTEEGFGEEAEQADLADLHEDVPLLNKRGPARVDFILSPTAPTPAPTLDEALSQTSLDSATNDVFTVPASLAGLPAISLPVDMKEDVHGVGRFAGIQIIGQYWDDARLLDVAVALRGVLGRGLV</sequence>
<name>GATA_PYRO7</name>